<keyword id="KW-0007">Acetylation</keyword>
<keyword id="KW-1003">Cell membrane</keyword>
<keyword id="KW-0175">Coiled coil</keyword>
<keyword id="KW-0963">Cytoplasm</keyword>
<keyword id="KW-0206">Cytoskeleton</keyword>
<keyword id="KW-0446">Lipid-binding</keyword>
<keyword id="KW-0449">Lipoprotein</keyword>
<keyword id="KW-0472">Membrane</keyword>
<keyword id="KW-0496">Mitochondrion</keyword>
<keyword id="KW-0999">Mitochondrion inner membrane</keyword>
<keyword id="KW-0597">Phosphoprotein</keyword>
<keyword id="KW-1185">Reference proteome</keyword>
<keyword id="KW-0809">Transit peptide</keyword>
<proteinExistence type="evidence at transcript level"/>
<feature type="transit peptide" description="Mitochondrion" evidence="4">
    <location>
        <begin position="1"/>
        <end position="28"/>
    </location>
</feature>
<feature type="chain" id="PRO_0000262587" description="Stomatin-like protein 2, mitochondrial">
    <location>
        <begin position="29"/>
        <end position="356"/>
    </location>
</feature>
<feature type="region of interest" description="Disordered" evidence="5">
    <location>
        <begin position="326"/>
        <end position="356"/>
    </location>
</feature>
<feature type="coiled-coil region" evidence="4">
    <location>
        <begin position="215"/>
        <end position="252"/>
    </location>
</feature>
<feature type="modified residue" description="Phosphoserine; by PKC/PRKCZ" evidence="3">
    <location>
        <position position="17"/>
    </location>
</feature>
<feature type="modified residue" description="Phosphotyrosine" evidence="3">
    <location>
        <position position="124"/>
    </location>
</feature>
<feature type="modified residue" description="N6-acetyllysine; alternate" evidence="3">
    <location>
        <position position="145"/>
    </location>
</feature>
<feature type="modified residue" description="N6-succinyllysine; alternate" evidence="2">
    <location>
        <position position="145"/>
    </location>
</feature>
<feature type="modified residue" description="N6-acetyllysine" evidence="3">
    <location>
        <position position="233"/>
    </location>
</feature>
<feature type="modified residue" description="Phosphoserine" evidence="3">
    <location>
        <position position="330"/>
    </location>
</feature>
<comment type="function">
    <text evidence="1">Mitochondrial protein that probably regulates the biogenesis and the activity of mitochondria. Stimulates cardiolipin biosynthesis, binds cardiolipin-enriched membranes where it recruits and stabilizes some proteins including prohibitin and may therefore act in the organization of functional microdomains in mitochondrial membranes. Through regulation of the mitochondrial function may play a role into several biological processes including cell migration, cell proliferation, T-cell activation, calcium homeostasis and cellular response to stress. May play a role in calcium homeostasis through negative regulation of calcium efflux from mitochondria. Required for mitochondrial hyperfusion a pro-survival cellular response to stress which results in increased ATP production by mitochondria. May also regulate the organization of functional domains at the plasma membrane and play a role in T-cell activation through association with the T-cell receptor signaling complex and its regulation (By similarity).</text>
</comment>
<comment type="subunit">
    <text evidence="1">Forms homooligomers. Interacts with MFN2; may form heterooligomers with this mediator of mitochondrial fusion. Interacts with PHB1 and PHB2; stabilizes and recruits them to cardiolipin-enriched mitochondrial membranes. Interacts with CACNA2D2 (By similarity).</text>
</comment>
<comment type="subcellular location">
    <subcellularLocation>
        <location evidence="3">Cell membrane</location>
        <topology evidence="3">Peripheral membrane protein</topology>
    </subcellularLocation>
    <subcellularLocation>
        <location evidence="3">Mitochondrion</location>
    </subcellularLocation>
    <subcellularLocation>
        <location evidence="3">Mitochondrion inner membrane</location>
        <topology evidence="3">Lipid-anchor</topology>
    </subcellularLocation>
    <subcellularLocation>
        <location evidence="3">Mitochondrion intermembrane space</location>
    </subcellularLocation>
    <subcellularLocation>
        <location evidence="3">Membrane raft</location>
    </subcellularLocation>
    <subcellularLocation>
        <location evidence="3">Cytoplasm</location>
        <location evidence="3">Cytoskeleton</location>
    </subcellularLocation>
    <text evidence="3">Behaves as an integral membrane protein of the mitochondrion despite the absence of a detectable transmembrane domain. Also associates with the actin cytoskeleton and membrane rafts in activated T-cells. A minor pool is associated with the plasma membrane and is enriched at the immunological synapse in activated T-cells.</text>
</comment>
<comment type="similarity">
    <text evidence="6">Belongs to the band 7/mec-2 family.</text>
</comment>
<organism>
    <name type="scientific">Bos taurus</name>
    <name type="common">Bovine</name>
    <dbReference type="NCBI Taxonomy" id="9913"/>
    <lineage>
        <taxon>Eukaryota</taxon>
        <taxon>Metazoa</taxon>
        <taxon>Chordata</taxon>
        <taxon>Craniata</taxon>
        <taxon>Vertebrata</taxon>
        <taxon>Euteleostomi</taxon>
        <taxon>Mammalia</taxon>
        <taxon>Eutheria</taxon>
        <taxon>Laurasiatheria</taxon>
        <taxon>Artiodactyla</taxon>
        <taxon>Ruminantia</taxon>
        <taxon>Pecora</taxon>
        <taxon>Bovidae</taxon>
        <taxon>Bovinae</taxon>
        <taxon>Bos</taxon>
    </lineage>
</organism>
<dbReference type="EMBL" id="BC109523">
    <property type="protein sequence ID" value="AAI09524.1"/>
    <property type="molecule type" value="mRNA"/>
</dbReference>
<dbReference type="RefSeq" id="NP_001033157.1">
    <property type="nucleotide sequence ID" value="NM_001038068.1"/>
</dbReference>
<dbReference type="SMR" id="Q32LL2"/>
<dbReference type="FunCoup" id="Q32LL2">
    <property type="interactions" value="3415"/>
</dbReference>
<dbReference type="STRING" id="9913.ENSBTAP00000015136"/>
<dbReference type="PaxDb" id="9913-ENSBTAP00000015136"/>
<dbReference type="PeptideAtlas" id="Q32LL2"/>
<dbReference type="GeneID" id="510324"/>
<dbReference type="KEGG" id="bta:510324"/>
<dbReference type="CTD" id="30968"/>
<dbReference type="eggNOG" id="KOG2620">
    <property type="taxonomic scope" value="Eukaryota"/>
</dbReference>
<dbReference type="InParanoid" id="Q32LL2"/>
<dbReference type="OrthoDB" id="434619at2759"/>
<dbReference type="Proteomes" id="UP000009136">
    <property type="component" value="Unplaced"/>
</dbReference>
<dbReference type="GO" id="GO:0015629">
    <property type="term" value="C:actin cytoskeleton"/>
    <property type="evidence" value="ECO:0000250"/>
    <property type="project" value="UniProtKB"/>
</dbReference>
<dbReference type="GO" id="GO:0001772">
    <property type="term" value="C:immunological synapse"/>
    <property type="evidence" value="ECO:0000250"/>
    <property type="project" value="UniProtKB"/>
</dbReference>
<dbReference type="GO" id="GO:0045121">
    <property type="term" value="C:membrane raft"/>
    <property type="evidence" value="ECO:0000250"/>
    <property type="project" value="UniProtKB"/>
</dbReference>
<dbReference type="GO" id="GO:0005743">
    <property type="term" value="C:mitochondrial inner membrane"/>
    <property type="evidence" value="ECO:0000250"/>
    <property type="project" value="UniProtKB"/>
</dbReference>
<dbReference type="GO" id="GO:0005758">
    <property type="term" value="C:mitochondrial intermembrane space"/>
    <property type="evidence" value="ECO:0000250"/>
    <property type="project" value="UniProtKB"/>
</dbReference>
<dbReference type="GO" id="GO:0005739">
    <property type="term" value="C:mitochondrion"/>
    <property type="evidence" value="ECO:0000318"/>
    <property type="project" value="GO_Central"/>
</dbReference>
<dbReference type="GO" id="GO:0005886">
    <property type="term" value="C:plasma membrane"/>
    <property type="evidence" value="ECO:0000250"/>
    <property type="project" value="UniProtKB"/>
</dbReference>
<dbReference type="GO" id="GO:1901612">
    <property type="term" value="F:cardiolipin binding"/>
    <property type="evidence" value="ECO:0000250"/>
    <property type="project" value="UniProtKB"/>
</dbReference>
<dbReference type="GO" id="GO:0042608">
    <property type="term" value="F:T cell receptor binding"/>
    <property type="evidence" value="ECO:0000250"/>
    <property type="project" value="UniProtKB"/>
</dbReference>
<dbReference type="GO" id="GO:0035710">
    <property type="term" value="P:CD4-positive, alpha-beta T cell activation"/>
    <property type="evidence" value="ECO:0000250"/>
    <property type="project" value="UniProtKB"/>
</dbReference>
<dbReference type="GO" id="GO:0006874">
    <property type="term" value="P:intracellular calcium ion homeostasis"/>
    <property type="evidence" value="ECO:0000250"/>
    <property type="project" value="UniProtKB"/>
</dbReference>
<dbReference type="GO" id="GO:0010876">
    <property type="term" value="P:lipid localization"/>
    <property type="evidence" value="ECO:0000250"/>
    <property type="project" value="UniProtKB"/>
</dbReference>
<dbReference type="GO" id="GO:0034982">
    <property type="term" value="P:mitochondrial protein processing"/>
    <property type="evidence" value="ECO:0000250"/>
    <property type="project" value="UniProtKB"/>
</dbReference>
<dbReference type="GO" id="GO:0007005">
    <property type="term" value="P:mitochondrion organization"/>
    <property type="evidence" value="ECO:0000250"/>
    <property type="project" value="UniProtKB"/>
</dbReference>
<dbReference type="GO" id="GO:0032743">
    <property type="term" value="P:positive regulation of interleukin-2 production"/>
    <property type="evidence" value="ECO:0000250"/>
    <property type="project" value="UniProtKB"/>
</dbReference>
<dbReference type="GO" id="GO:0051259">
    <property type="term" value="P:protein complex oligomerization"/>
    <property type="evidence" value="ECO:0000250"/>
    <property type="project" value="UniProtKB"/>
</dbReference>
<dbReference type="GO" id="GO:1990046">
    <property type="term" value="P:stress-induced mitochondrial fusion"/>
    <property type="evidence" value="ECO:0000250"/>
    <property type="project" value="UniProtKB"/>
</dbReference>
<dbReference type="GO" id="GO:0050852">
    <property type="term" value="P:T cell receptor signaling pathway"/>
    <property type="evidence" value="ECO:0000250"/>
    <property type="project" value="UniProtKB"/>
</dbReference>
<dbReference type="CDD" id="cd08829">
    <property type="entry name" value="SPFH_paraslipin"/>
    <property type="match status" value="1"/>
</dbReference>
<dbReference type="FunFam" id="3.30.479.30:FF:000008">
    <property type="entry name" value="Stomatin-like protein 2, mitochondrial"/>
    <property type="match status" value="1"/>
</dbReference>
<dbReference type="Gene3D" id="3.30.479.30">
    <property type="entry name" value="Band 7 domain"/>
    <property type="match status" value="1"/>
</dbReference>
<dbReference type="InterPro" id="IPR050710">
    <property type="entry name" value="Band7/mec-2_domain"/>
</dbReference>
<dbReference type="InterPro" id="IPR001107">
    <property type="entry name" value="Band_7"/>
</dbReference>
<dbReference type="InterPro" id="IPR036013">
    <property type="entry name" value="Band_7/SPFH_dom_sf"/>
</dbReference>
<dbReference type="InterPro" id="IPR032435">
    <property type="entry name" value="STML2-like_C"/>
</dbReference>
<dbReference type="InterPro" id="IPR001972">
    <property type="entry name" value="Stomatin_HflK_fam"/>
</dbReference>
<dbReference type="PANTHER" id="PTHR43327">
    <property type="entry name" value="STOMATIN-LIKE PROTEIN 2, MITOCHONDRIAL"/>
    <property type="match status" value="1"/>
</dbReference>
<dbReference type="PANTHER" id="PTHR43327:SF10">
    <property type="entry name" value="STOMATIN-LIKE PROTEIN 2, MITOCHONDRIAL"/>
    <property type="match status" value="1"/>
</dbReference>
<dbReference type="Pfam" id="PF01145">
    <property type="entry name" value="Band_7"/>
    <property type="match status" value="1"/>
</dbReference>
<dbReference type="Pfam" id="PF16200">
    <property type="entry name" value="Band_7_C"/>
    <property type="match status" value="1"/>
</dbReference>
<dbReference type="PRINTS" id="PR00721">
    <property type="entry name" value="STOMATIN"/>
</dbReference>
<dbReference type="SMART" id="SM00244">
    <property type="entry name" value="PHB"/>
    <property type="match status" value="1"/>
</dbReference>
<dbReference type="SUPFAM" id="SSF117892">
    <property type="entry name" value="Band 7/SPFH domain"/>
    <property type="match status" value="1"/>
</dbReference>
<name>STML2_BOVIN</name>
<evidence type="ECO:0000250" key="1"/>
<evidence type="ECO:0000250" key="2">
    <source>
        <dbReference type="UniProtKB" id="Q99JB2"/>
    </source>
</evidence>
<evidence type="ECO:0000250" key="3">
    <source>
        <dbReference type="UniProtKB" id="Q9UJZ1"/>
    </source>
</evidence>
<evidence type="ECO:0000255" key="4"/>
<evidence type="ECO:0000256" key="5">
    <source>
        <dbReference type="SAM" id="MobiDB-lite"/>
    </source>
</evidence>
<evidence type="ECO:0000305" key="6"/>
<sequence length="356" mass="38733">MLARAARGTGALLLKGSVQASARAPRRASSGLPRNTVVLFVPQQEAWVVERMGRFHRILEPGLNILIPVLDRIRYVQSLKEIVINVPEQSAVTLDNVTLQIDGVLYLRIMDPYKASYGVEDPEYAVTQLAQTTMRSELGKLSLDKVFRERESLNASIVDAINQAADCWGIRCLRYEIKDIHVPPRVKESMKMQVEAERRKRATVLESEGTRESAINVAEGKKQAQILASEAEKAEQINQAAGEASAVLAKAKAKAEAIRILAAALTQHNGDAAASLTVAEQYVSAFSKLAKDSNTILLPSNPGDVTSMVAQAMGVYGALTKAPIPEAQDSVSSRSSRDVRSTDASLDEELDRVKLS</sequence>
<reference key="1">
    <citation type="submission" date="2005-11" db="EMBL/GenBank/DDBJ databases">
        <authorList>
            <consortium name="NIH - Mammalian Gene Collection (MGC) project"/>
        </authorList>
    </citation>
    <scope>NUCLEOTIDE SEQUENCE [LARGE SCALE MRNA]</scope>
    <source>
        <strain>Crossbred X Angus</strain>
        <tissue>Liver</tissue>
    </source>
</reference>
<gene>
    <name type="primary">STOML2</name>
</gene>
<protein>
    <recommendedName>
        <fullName>Stomatin-like protein 2, mitochondrial</fullName>
        <shortName>SLP-2</shortName>
    </recommendedName>
</protein>
<accession>Q32LL2</accession>